<protein>
    <recommendedName>
        <fullName>Metal-response element-binding transcription factor 2</fullName>
    </recommendedName>
    <alternativeName>
        <fullName>Metal regulatory transcription factor 2</fullName>
    </alternativeName>
    <alternativeName>
        <fullName>Metal-response element DNA-binding protein M96</fullName>
    </alternativeName>
    <alternativeName>
        <fullName>Polycomb-like protein 2</fullName>
        <shortName>hPCl2</shortName>
    </alternativeName>
</protein>
<proteinExistence type="evidence at protein level"/>
<sequence>MRDSTGAGNSLVHKRSPLRRNQKTPTSLTKLSLQDGHKAKKPACKFEEGQDVLARWSDGLFYLGTIKKINILKQSCFIIFEDSSKSWVLWKDIQTGATGSGEMVCTICQEEYSEAPNEMVICDKCGQGYHQLCHTPHIDSSVIDSDEKWLCRQCVFATTTKRGGALKKGPNAKALQVMKQTLPYSVADLEWDAGHKTNVQQCYCYCGGPGDWYLKMLQCCKCKQWFHEACVQCLQKPMLFGDRFYTFICSVCSSGPEYLKRLPLQWVDIAHLCLYNLSVIHKKKYFDSELELMTYINENWDRLHPGELADTPKSERYEHVLEALNDYKTMFMSGKEIKKKKHLFGLRIRVPPVPPNVAFKAEKEPEGTSHEFKIKGRKASKPISDSREVSNGIEKKGKKKSVGRPPGPYTRKMIQKTAEPLLDKESISENPTLDLPCSIGRTEGTAHSSNTSDVDFTGASSAKETTSSSISRHYGLSDSRKRTRTGRSWPAAIPHLRRRRGRLPRRALQTQNSEIVKDDEGKEDYQFDELNTEILNNLADQELQLNHLKNSITSYFGAAGRIACGEKYRVLARRVTLDGKVQYLVEWEGATAS</sequence>
<dbReference type="EMBL" id="AF072814">
    <property type="protein sequence ID" value="AAC27618.1"/>
    <property type="molecule type" value="mRNA"/>
</dbReference>
<dbReference type="EMBL" id="AF073293">
    <property type="protein sequence ID" value="AAC27080.1"/>
    <property type="molecule type" value="mRNA"/>
</dbReference>
<dbReference type="EMBL" id="AJ010014">
    <property type="protein sequence ID" value="CAA08970.1"/>
    <property type="molecule type" value="mRNA"/>
</dbReference>
<dbReference type="EMBL" id="AK290318">
    <property type="protein sequence ID" value="BAF83007.1"/>
    <property type="molecule type" value="mRNA"/>
</dbReference>
<dbReference type="EMBL" id="AC093577">
    <property type="status" value="NOT_ANNOTATED_CDS"/>
    <property type="molecule type" value="Genomic_DNA"/>
</dbReference>
<dbReference type="EMBL" id="AL117354">
    <property type="status" value="NOT_ANNOTATED_CDS"/>
    <property type="molecule type" value="Genomic_DNA"/>
</dbReference>
<dbReference type="EMBL" id="KF459519">
    <property type="status" value="NOT_ANNOTATED_CDS"/>
    <property type="molecule type" value="Genomic_DNA"/>
</dbReference>
<dbReference type="EMBL" id="BC010013">
    <property type="protein sequence ID" value="AAH10013.1"/>
    <property type="molecule type" value="mRNA"/>
</dbReference>
<dbReference type="CCDS" id="CCDS53340.1">
    <molecule id="Q9Y483-4"/>
</dbReference>
<dbReference type="CCDS" id="CCDS53341.1">
    <molecule id="Q9Y483-3"/>
</dbReference>
<dbReference type="CCDS" id="CCDS742.1">
    <molecule id="Q9Y483-1"/>
</dbReference>
<dbReference type="RefSeq" id="NP_001157863.1">
    <molecule id="Q9Y483-3"/>
    <property type="nucleotide sequence ID" value="NM_001164391.2"/>
</dbReference>
<dbReference type="RefSeq" id="NP_001157864.1">
    <molecule id="Q9Y483-4"/>
    <property type="nucleotide sequence ID" value="NM_001164392.2"/>
</dbReference>
<dbReference type="RefSeq" id="NP_001157865.1">
    <molecule id="Q9Y483-3"/>
    <property type="nucleotide sequence ID" value="NM_001164393.2"/>
</dbReference>
<dbReference type="RefSeq" id="NP_031384.1">
    <molecule id="Q9Y483-1"/>
    <property type="nucleotide sequence ID" value="NM_007358.4"/>
</dbReference>
<dbReference type="RefSeq" id="XP_011539318.1">
    <property type="nucleotide sequence ID" value="XM_011541016.1"/>
</dbReference>
<dbReference type="RefSeq" id="XP_016856165.1">
    <property type="nucleotide sequence ID" value="XM_017000676.1"/>
</dbReference>
<dbReference type="PDB" id="5XFR">
    <property type="method" value="X-ray"/>
    <property type="resolution" value="2.25 A"/>
    <property type="chains" value="A/B=43-358"/>
</dbReference>
<dbReference type="PDBsum" id="5XFR"/>
<dbReference type="SMR" id="Q9Y483"/>
<dbReference type="BioGRID" id="116499">
    <property type="interactions" value="124"/>
</dbReference>
<dbReference type="ComplexPortal" id="CPX-2309">
    <property type="entry name" value="Polycomb repressive complex 2.1, EZH1-RBBP7-PCL2-PALI1 variant"/>
</dbReference>
<dbReference type="ComplexPortal" id="CPX-2310">
    <property type="entry name" value="Polycomb repressive complex 2.1, EZH1-RBBP4-PCL2-PALI1 variant"/>
</dbReference>
<dbReference type="ComplexPortal" id="CPX-2312">
    <property type="entry name" value="Polycomb repressive complex 2.1, EZH2-RBBP4-PCL2-PALI1 variant"/>
</dbReference>
<dbReference type="ComplexPortal" id="CPX-2314">
    <property type="entry name" value="Polycomb repressive complex 2.1,EZH2-RBBP7-PCL2-PALI1 variant"/>
</dbReference>
<dbReference type="ComplexPortal" id="CPX-2318">
    <property type="entry name" value="Polycomb repressive complex 2.1, EZH1-RBBP4-PCL2-EPOP variant"/>
</dbReference>
<dbReference type="ComplexPortal" id="CPX-2320">
    <property type="entry name" value="Polycomb repressive complex 2.1, EZH1-RBBP7-PCL2-EPOP variant"/>
</dbReference>
<dbReference type="ComplexPortal" id="CPX-2326">
    <property type="entry name" value="Polycomb repressive complex 2.1, EZH2-RBBP4-PCL2-EPOP variant"/>
</dbReference>
<dbReference type="ComplexPortal" id="CPX-2327">
    <property type="entry name" value="Polycomb repressive complex 2.1, EZH2-RBBP7-PCL2-EPOP variant"/>
</dbReference>
<dbReference type="FunCoup" id="Q9Y483">
    <property type="interactions" value="4573"/>
</dbReference>
<dbReference type="IntAct" id="Q9Y483">
    <property type="interactions" value="58"/>
</dbReference>
<dbReference type="MINT" id="Q9Y483"/>
<dbReference type="STRING" id="9606.ENSP00000359321"/>
<dbReference type="iPTMnet" id="Q9Y483"/>
<dbReference type="PhosphoSitePlus" id="Q9Y483"/>
<dbReference type="SwissPalm" id="Q9Y483"/>
<dbReference type="BioMuta" id="MTF2"/>
<dbReference type="DMDM" id="317373393"/>
<dbReference type="jPOST" id="Q9Y483"/>
<dbReference type="MassIVE" id="Q9Y483"/>
<dbReference type="PaxDb" id="9606-ENSP00000359321"/>
<dbReference type="PeptideAtlas" id="Q9Y483"/>
<dbReference type="ProteomicsDB" id="3108"/>
<dbReference type="ProteomicsDB" id="86123">
    <molecule id="Q9Y483-1"/>
</dbReference>
<dbReference type="ProteomicsDB" id="86124">
    <molecule id="Q9Y483-2"/>
</dbReference>
<dbReference type="ProteomicsDB" id="86125">
    <molecule id="Q9Y483-3"/>
</dbReference>
<dbReference type="Pumba" id="Q9Y483"/>
<dbReference type="ABCD" id="Q9Y483">
    <property type="antibodies" value="1 sequenced antibody"/>
</dbReference>
<dbReference type="Antibodypedia" id="19938">
    <property type="antibodies" value="182 antibodies from 29 providers"/>
</dbReference>
<dbReference type="DNASU" id="22823"/>
<dbReference type="Ensembl" id="ENST00000370298.9">
    <molecule id="Q9Y483-1"/>
    <property type="protein sequence ID" value="ENSP00000359321.4"/>
    <property type="gene ID" value="ENSG00000143033.18"/>
</dbReference>
<dbReference type="Ensembl" id="ENST00000370303.4">
    <molecule id="Q9Y483-4"/>
    <property type="protein sequence ID" value="ENSP00000359326.4"/>
    <property type="gene ID" value="ENSG00000143033.18"/>
</dbReference>
<dbReference type="Ensembl" id="ENST00000540243.5">
    <molecule id="Q9Y483-3"/>
    <property type="protein sequence ID" value="ENSP00000443295.1"/>
    <property type="gene ID" value="ENSG00000143033.18"/>
</dbReference>
<dbReference type="Ensembl" id="ENST00000545708.5">
    <molecule id="Q9Y483-3"/>
    <property type="protein sequence ID" value="ENSP00000444962.1"/>
    <property type="gene ID" value="ENSG00000143033.18"/>
</dbReference>
<dbReference type="GeneID" id="22823"/>
<dbReference type="KEGG" id="hsa:22823"/>
<dbReference type="MANE-Select" id="ENST00000370298.9">
    <property type="protein sequence ID" value="ENSP00000359321.4"/>
    <property type="RefSeq nucleotide sequence ID" value="NM_007358.4"/>
    <property type="RefSeq protein sequence ID" value="NP_031384.1"/>
</dbReference>
<dbReference type="UCSC" id="uc009wdj.4">
    <molecule id="Q9Y483-1"/>
    <property type="organism name" value="human"/>
</dbReference>
<dbReference type="UCSC" id="uc009wdk.4">
    <property type="organism name" value="human"/>
</dbReference>
<dbReference type="AGR" id="HGNC:29535"/>
<dbReference type="CTD" id="22823"/>
<dbReference type="DisGeNET" id="22823"/>
<dbReference type="GeneCards" id="MTF2"/>
<dbReference type="HGNC" id="HGNC:29535">
    <property type="gene designation" value="MTF2"/>
</dbReference>
<dbReference type="HPA" id="ENSG00000143033">
    <property type="expression patterns" value="Low tissue specificity"/>
</dbReference>
<dbReference type="MIM" id="609882">
    <property type="type" value="gene"/>
</dbReference>
<dbReference type="neXtProt" id="NX_Q9Y483"/>
<dbReference type="OpenTargets" id="ENSG00000143033"/>
<dbReference type="PharmGKB" id="PA128394586"/>
<dbReference type="VEuPathDB" id="HostDB:ENSG00000143033"/>
<dbReference type="eggNOG" id="KOG4323">
    <property type="taxonomic scope" value="Eukaryota"/>
</dbReference>
<dbReference type="GeneTree" id="ENSGT00950000183180"/>
<dbReference type="InParanoid" id="Q9Y483"/>
<dbReference type="OMA" id="XFYTFIC"/>
<dbReference type="OrthoDB" id="10033786at2759"/>
<dbReference type="PAN-GO" id="Q9Y483">
    <property type="GO annotations" value="6 GO annotations based on evolutionary models"/>
</dbReference>
<dbReference type="PhylomeDB" id="Q9Y483"/>
<dbReference type="TreeFam" id="TF106420"/>
<dbReference type="PathwayCommons" id="Q9Y483"/>
<dbReference type="Reactome" id="R-HSA-212300">
    <property type="pathway name" value="PRC2 methylates histones and DNA"/>
</dbReference>
<dbReference type="SignaLink" id="Q9Y483"/>
<dbReference type="BioGRID-ORCS" id="22823">
    <property type="hits" value="19 hits in 1170 CRISPR screens"/>
</dbReference>
<dbReference type="ChiTaRS" id="MTF2">
    <property type="organism name" value="human"/>
</dbReference>
<dbReference type="GenomeRNAi" id="22823"/>
<dbReference type="Pharos" id="Q9Y483">
    <property type="development level" value="Tbio"/>
</dbReference>
<dbReference type="PRO" id="PR:Q9Y483"/>
<dbReference type="Proteomes" id="UP000005640">
    <property type="component" value="Chromosome 1"/>
</dbReference>
<dbReference type="RNAct" id="Q9Y483">
    <property type="molecule type" value="protein"/>
</dbReference>
<dbReference type="Bgee" id="ENSG00000143033">
    <property type="expression patterns" value="Expressed in secondary oocyte and 214 other cell types or tissues"/>
</dbReference>
<dbReference type="ExpressionAtlas" id="Q9Y483">
    <property type="expression patterns" value="baseline and differential"/>
</dbReference>
<dbReference type="GO" id="GO:0005737">
    <property type="term" value="C:cytoplasm"/>
    <property type="evidence" value="ECO:0000314"/>
    <property type="project" value="UniProtKB"/>
</dbReference>
<dbReference type="GO" id="GO:0035098">
    <property type="term" value="C:ESC/E(Z) complex"/>
    <property type="evidence" value="ECO:0007669"/>
    <property type="project" value="Ensembl"/>
</dbReference>
<dbReference type="GO" id="GO:0005654">
    <property type="term" value="C:nucleoplasm"/>
    <property type="evidence" value="ECO:0000314"/>
    <property type="project" value="HPA"/>
</dbReference>
<dbReference type="GO" id="GO:0005634">
    <property type="term" value="C:nucleus"/>
    <property type="evidence" value="ECO:0000314"/>
    <property type="project" value="UniProtKB"/>
</dbReference>
<dbReference type="GO" id="GO:0003682">
    <property type="term" value="F:chromatin binding"/>
    <property type="evidence" value="ECO:0000318"/>
    <property type="project" value="GO_Central"/>
</dbReference>
<dbReference type="GO" id="GO:0003677">
    <property type="term" value="F:DNA binding"/>
    <property type="evidence" value="ECO:0000318"/>
    <property type="project" value="GO_Central"/>
</dbReference>
<dbReference type="GO" id="GO:0140003">
    <property type="term" value="F:histone H3K36me3 reader activity"/>
    <property type="evidence" value="ECO:0007669"/>
    <property type="project" value="Ensembl"/>
</dbReference>
<dbReference type="GO" id="GO:0035064">
    <property type="term" value="F:methylated histone binding"/>
    <property type="evidence" value="ECO:0000318"/>
    <property type="project" value="GO_Central"/>
</dbReference>
<dbReference type="GO" id="GO:0000977">
    <property type="term" value="F:RNA polymerase II transcription regulatory region sequence-specific DNA binding"/>
    <property type="evidence" value="ECO:0007669"/>
    <property type="project" value="Ensembl"/>
</dbReference>
<dbReference type="GO" id="GO:0001222">
    <property type="term" value="F:transcription corepressor binding"/>
    <property type="evidence" value="ECO:0000353"/>
    <property type="project" value="ARUK-UCL"/>
</dbReference>
<dbReference type="GO" id="GO:0008270">
    <property type="term" value="F:zinc ion binding"/>
    <property type="evidence" value="ECO:0007669"/>
    <property type="project" value="UniProtKB-KW"/>
</dbReference>
<dbReference type="GO" id="GO:1990830">
    <property type="term" value="P:cellular response to leukemia inhibitory factor"/>
    <property type="evidence" value="ECO:0007669"/>
    <property type="project" value="Ensembl"/>
</dbReference>
<dbReference type="GO" id="GO:0040029">
    <property type="term" value="P:epigenetic regulation of gene expression"/>
    <property type="evidence" value="ECO:0000250"/>
    <property type="project" value="UniProtKB"/>
</dbReference>
<dbReference type="GO" id="GO:0045814">
    <property type="term" value="P:negative regulation of gene expression, epigenetic"/>
    <property type="evidence" value="ECO:0000318"/>
    <property type="project" value="GO_Central"/>
</dbReference>
<dbReference type="GO" id="GO:0007379">
    <property type="term" value="P:segment specification"/>
    <property type="evidence" value="ECO:0000250"/>
    <property type="project" value="UniProtKB"/>
</dbReference>
<dbReference type="GO" id="GO:0048863">
    <property type="term" value="P:stem cell differentiation"/>
    <property type="evidence" value="ECO:0000250"/>
    <property type="project" value="UniProtKB"/>
</dbReference>
<dbReference type="GO" id="GO:0019827">
    <property type="term" value="P:stem cell population maintenance"/>
    <property type="evidence" value="ECO:0000250"/>
    <property type="project" value="UniProtKB"/>
</dbReference>
<dbReference type="CDD" id="cd15578">
    <property type="entry name" value="PHD1_MTF2"/>
    <property type="match status" value="1"/>
</dbReference>
<dbReference type="CDD" id="cd15580">
    <property type="entry name" value="PHD2_MTF2"/>
    <property type="match status" value="1"/>
</dbReference>
<dbReference type="CDD" id="cd20450">
    <property type="entry name" value="Tudor_MTF2"/>
    <property type="match status" value="1"/>
</dbReference>
<dbReference type="FunFam" id="2.30.30.140:FF:000014">
    <property type="entry name" value="Metal-response element-binding transcription factor 2"/>
    <property type="match status" value="1"/>
</dbReference>
<dbReference type="FunFam" id="3.30.40.10:FF:000126">
    <property type="entry name" value="metal-response element-binding transcription factor 2 isoform X1"/>
    <property type="match status" value="1"/>
</dbReference>
<dbReference type="FunFam" id="3.90.980.20:FF:000001">
    <property type="entry name" value="metal-response element-binding transcription factor 2 isoform X1"/>
    <property type="match status" value="1"/>
</dbReference>
<dbReference type="Gene3D" id="2.30.30.140">
    <property type="match status" value="1"/>
</dbReference>
<dbReference type="Gene3D" id="3.90.980.20">
    <property type="match status" value="1"/>
</dbReference>
<dbReference type="Gene3D" id="3.30.40.10">
    <property type="entry name" value="Zinc/RING finger domain, C3HC4 (zinc finger)"/>
    <property type="match status" value="1"/>
</dbReference>
<dbReference type="InterPro" id="IPR040477">
    <property type="entry name" value="KDM4-like_Tudor"/>
</dbReference>
<dbReference type="InterPro" id="IPR025894">
    <property type="entry name" value="Mtf2_C_dom"/>
</dbReference>
<dbReference type="InterPro" id="IPR042014">
    <property type="entry name" value="MTF2_PHD1"/>
</dbReference>
<dbReference type="InterPro" id="IPR042015">
    <property type="entry name" value="MTF2_PHD2"/>
</dbReference>
<dbReference type="InterPro" id="IPR002999">
    <property type="entry name" value="Tudor"/>
</dbReference>
<dbReference type="InterPro" id="IPR019786">
    <property type="entry name" value="Zinc_finger_PHD-type_CS"/>
</dbReference>
<dbReference type="InterPro" id="IPR011011">
    <property type="entry name" value="Znf_FYVE_PHD"/>
</dbReference>
<dbReference type="InterPro" id="IPR001965">
    <property type="entry name" value="Znf_PHD"/>
</dbReference>
<dbReference type="InterPro" id="IPR019787">
    <property type="entry name" value="Znf_PHD-finger"/>
</dbReference>
<dbReference type="InterPro" id="IPR013083">
    <property type="entry name" value="Znf_RING/FYVE/PHD"/>
</dbReference>
<dbReference type="PANTHER" id="PTHR12628:SF12">
    <property type="entry name" value="METAL-RESPONSE ELEMENT-BINDING TRANSCRIPTION FACTOR 2"/>
    <property type="match status" value="1"/>
</dbReference>
<dbReference type="PANTHER" id="PTHR12628">
    <property type="entry name" value="POLYCOMB-LIKE TRANSCRIPTION FACTOR"/>
    <property type="match status" value="1"/>
</dbReference>
<dbReference type="Pfam" id="PF14061">
    <property type="entry name" value="Mtf2_C"/>
    <property type="match status" value="1"/>
</dbReference>
<dbReference type="Pfam" id="PF00628">
    <property type="entry name" value="PHD"/>
    <property type="match status" value="1"/>
</dbReference>
<dbReference type="Pfam" id="PF18104">
    <property type="entry name" value="Tudor_2"/>
    <property type="match status" value="1"/>
</dbReference>
<dbReference type="SMART" id="SM00249">
    <property type="entry name" value="PHD"/>
    <property type="match status" value="2"/>
</dbReference>
<dbReference type="SMART" id="SM00333">
    <property type="entry name" value="TUDOR"/>
    <property type="match status" value="1"/>
</dbReference>
<dbReference type="SUPFAM" id="SSF57903">
    <property type="entry name" value="FYVE/PHD zinc finger"/>
    <property type="match status" value="2"/>
</dbReference>
<dbReference type="SUPFAM" id="SSF63748">
    <property type="entry name" value="Tudor/PWWP/MBT"/>
    <property type="match status" value="1"/>
</dbReference>
<dbReference type="PROSITE" id="PS01359">
    <property type="entry name" value="ZF_PHD_1"/>
    <property type="match status" value="2"/>
</dbReference>
<dbReference type="PROSITE" id="PS50016">
    <property type="entry name" value="ZF_PHD_2"/>
    <property type="match status" value="1"/>
</dbReference>
<name>MTF2_HUMAN</name>
<gene>
    <name type="primary">MTF2</name>
    <name type="synonym">PCL2</name>
</gene>
<feature type="chain" id="PRO_0000059317" description="Metal-response element-binding transcription factor 2">
    <location>
        <begin position="1"/>
        <end position="593"/>
    </location>
</feature>
<feature type="domain" description="Tudor">
    <location>
        <begin position="44"/>
        <end position="101"/>
    </location>
</feature>
<feature type="zinc finger region" description="PHD-type 1" evidence="2">
    <location>
        <begin position="102"/>
        <end position="157"/>
    </location>
</feature>
<feature type="zinc finger region" description="PHD-type 2" evidence="2">
    <location>
        <begin position="201"/>
        <end position="255"/>
    </location>
</feature>
<feature type="region of interest" description="Disordered" evidence="3">
    <location>
        <begin position="1"/>
        <end position="35"/>
    </location>
</feature>
<feature type="region of interest" description="Disordered" evidence="3">
    <location>
        <begin position="360"/>
        <end position="411"/>
    </location>
</feature>
<feature type="region of interest" description="Disordered" evidence="3">
    <location>
        <begin position="424"/>
        <end position="486"/>
    </location>
</feature>
<feature type="compositionally biased region" description="Basic residues" evidence="3">
    <location>
        <begin position="12"/>
        <end position="22"/>
    </location>
</feature>
<feature type="compositionally biased region" description="Polar residues" evidence="3">
    <location>
        <begin position="23"/>
        <end position="32"/>
    </location>
</feature>
<feature type="compositionally biased region" description="Basic and acidic residues" evidence="3">
    <location>
        <begin position="360"/>
        <end position="374"/>
    </location>
</feature>
<feature type="compositionally biased region" description="Polar residues" evidence="3">
    <location>
        <begin position="445"/>
        <end position="454"/>
    </location>
</feature>
<feature type="compositionally biased region" description="Low complexity" evidence="3">
    <location>
        <begin position="459"/>
        <end position="471"/>
    </location>
</feature>
<feature type="modified residue" description="Phosphothreonine" evidence="10">
    <location>
        <position position="24"/>
    </location>
</feature>
<feature type="modified residue" description="Phosphoserine" evidence="11">
    <location>
        <position position="452"/>
    </location>
</feature>
<feature type="cross-link" description="Glycyl lysine isopeptide (Lys-Gly) (interchain with G-Cter in SUMO2)" evidence="12">
    <location>
        <position position="360"/>
    </location>
</feature>
<feature type="cross-link" description="Glycyl lysine isopeptide (Lys-Gly) (interchain with G-Cter in SUMO2)" evidence="12">
    <location>
        <position position="522"/>
    </location>
</feature>
<feature type="splice variant" id="VSP_004696" description="In isoform 2." evidence="8">
    <location>
        <begin position="1"/>
        <end position="331"/>
    </location>
</feature>
<feature type="splice variant" id="VSP_040329" description="In isoform 3." evidence="8">
    <location>
        <begin position="1"/>
        <end position="102"/>
    </location>
</feature>
<feature type="splice variant" id="VSP_053348" description="In isoform 4." evidence="7">
    <location>
        <begin position="331"/>
        <end position="387"/>
    </location>
</feature>
<feature type="sequence variant" id="VAR_054765" description="In dbSNP:rs2815427.">
    <original>S</original>
    <variation>C</variation>
    <location>
        <position position="140"/>
    </location>
</feature>
<feature type="mutagenesis site" description="Abolishes chromatin binding activity of the PRC2.1 complex." evidence="6">
    <original>KK</original>
    <variation>AA</variation>
    <location>
        <begin position="338"/>
        <end position="339"/>
    </location>
</feature>
<feature type="mutagenesis site" description="Reduced chromatin binding activity of the PRC2.1 complex, probably due to loss of dimer stability." evidence="6">
    <location>
        <begin position="544"/>
        <end position="557"/>
    </location>
</feature>
<feature type="strand" evidence="13">
    <location>
        <begin position="51"/>
        <end position="55"/>
    </location>
</feature>
<feature type="strand" evidence="13">
    <location>
        <begin position="61"/>
        <end position="70"/>
    </location>
</feature>
<feature type="turn" evidence="13">
    <location>
        <begin position="71"/>
        <end position="74"/>
    </location>
</feature>
<feature type="strand" evidence="13">
    <location>
        <begin position="75"/>
        <end position="80"/>
    </location>
</feature>
<feature type="strand" evidence="13">
    <location>
        <begin position="85"/>
        <end position="89"/>
    </location>
</feature>
<feature type="helix" evidence="13">
    <location>
        <begin position="90"/>
        <end position="92"/>
    </location>
</feature>
<feature type="strand" evidence="13">
    <location>
        <begin position="93"/>
        <end position="95"/>
    </location>
</feature>
<feature type="turn" evidence="13">
    <location>
        <begin position="106"/>
        <end position="108"/>
    </location>
</feature>
<feature type="strand" evidence="13">
    <location>
        <begin position="119"/>
        <end position="121"/>
    </location>
</feature>
<feature type="turn" evidence="13">
    <location>
        <begin position="123"/>
        <end position="125"/>
    </location>
</feature>
<feature type="strand" evidence="13">
    <location>
        <begin position="128"/>
        <end position="130"/>
    </location>
</feature>
<feature type="turn" evidence="13">
    <location>
        <begin position="131"/>
        <end position="133"/>
    </location>
</feature>
<feature type="strand" evidence="13">
    <location>
        <begin position="134"/>
        <end position="136"/>
    </location>
</feature>
<feature type="turn" evidence="13">
    <location>
        <begin position="140"/>
        <end position="144"/>
    </location>
</feature>
<feature type="strand" evidence="13">
    <location>
        <begin position="145"/>
        <end position="147"/>
    </location>
</feature>
<feature type="helix" evidence="13">
    <location>
        <begin position="152"/>
        <end position="159"/>
    </location>
</feature>
<feature type="helix" evidence="13">
    <location>
        <begin position="170"/>
        <end position="178"/>
    </location>
</feature>
<feature type="helix" evidence="13">
    <location>
        <begin position="186"/>
        <end position="188"/>
    </location>
</feature>
<feature type="turn" evidence="13">
    <location>
        <begin position="204"/>
        <end position="207"/>
    </location>
</feature>
<feature type="turn" evidence="13">
    <location>
        <begin position="212"/>
        <end position="215"/>
    </location>
</feature>
<feature type="strand" evidence="13">
    <location>
        <begin position="216"/>
        <end position="219"/>
    </location>
</feature>
<feature type="turn" evidence="13">
    <location>
        <begin position="220"/>
        <end position="222"/>
    </location>
</feature>
<feature type="strand" evidence="13">
    <location>
        <begin position="225"/>
        <end position="227"/>
    </location>
</feature>
<feature type="helix" evidence="13">
    <location>
        <begin position="228"/>
        <end position="230"/>
    </location>
</feature>
<feature type="strand" evidence="13">
    <location>
        <begin position="245"/>
        <end position="248"/>
    </location>
</feature>
<feature type="helix" evidence="13">
    <location>
        <begin position="250"/>
        <end position="253"/>
    </location>
</feature>
<feature type="strand" evidence="13">
    <location>
        <begin position="258"/>
        <end position="261"/>
    </location>
</feature>
<feature type="helix" evidence="13">
    <location>
        <begin position="266"/>
        <end position="281"/>
    </location>
</feature>
<feature type="turn" evidence="13">
    <location>
        <begin position="288"/>
        <end position="291"/>
    </location>
</feature>
<feature type="helix" evidence="13">
    <location>
        <begin position="292"/>
        <end position="298"/>
    </location>
</feature>
<feature type="helix" evidence="13">
    <location>
        <begin position="300"/>
        <end position="303"/>
    </location>
</feature>
<feature type="helix" evidence="13">
    <location>
        <begin position="307"/>
        <end position="310"/>
    </location>
</feature>
<feature type="helix" evidence="13">
    <location>
        <begin position="313"/>
        <end position="326"/>
    </location>
</feature>
<feature type="turn" evidence="13">
    <location>
        <begin position="328"/>
        <end position="330"/>
    </location>
</feature>
<feature type="strand" evidence="13">
    <location>
        <begin position="331"/>
        <end position="333"/>
    </location>
</feature>
<feature type="helix" evidence="13">
    <location>
        <begin position="334"/>
        <end position="337"/>
    </location>
</feature>
<feature type="strand" evidence="13">
    <location>
        <begin position="343"/>
        <end position="348"/>
    </location>
</feature>
<reference key="1">
    <citation type="submission" date="1998-06" db="EMBL/GenBank/DDBJ databases">
        <title>Isolation and cloning of a novel human M96 cDNA, spliced isoforms.</title>
        <authorList>
            <person name="Tao B."/>
            <person name="Wang J."/>
            <person name="Yuan J."/>
            <person name="Qiang B."/>
        </authorList>
    </citation>
    <scope>NUCLEOTIDE SEQUENCE [MRNA] (ISOFORMS 2 AND 3)</scope>
</reference>
<reference key="2">
    <citation type="submission" date="1998-08" db="EMBL/GenBank/DDBJ databases">
        <title>The polycomblike protein family.</title>
        <authorList>
            <person name="Holen T."/>
            <person name="Aasland R."/>
        </authorList>
    </citation>
    <scope>NUCLEOTIDE SEQUENCE [MRNA] (ISOFORM 1)</scope>
</reference>
<reference key="3">
    <citation type="journal article" date="2004" name="Nat. Genet.">
        <title>Complete sequencing and characterization of 21,243 full-length human cDNAs.</title>
        <authorList>
            <person name="Ota T."/>
            <person name="Suzuki Y."/>
            <person name="Nishikawa T."/>
            <person name="Otsuki T."/>
            <person name="Sugiyama T."/>
            <person name="Irie R."/>
            <person name="Wakamatsu A."/>
            <person name="Hayashi K."/>
            <person name="Sato H."/>
            <person name="Nagai K."/>
            <person name="Kimura K."/>
            <person name="Makita H."/>
            <person name="Sekine M."/>
            <person name="Obayashi M."/>
            <person name="Nishi T."/>
            <person name="Shibahara T."/>
            <person name="Tanaka T."/>
            <person name="Ishii S."/>
            <person name="Yamamoto J."/>
            <person name="Saito K."/>
            <person name="Kawai Y."/>
            <person name="Isono Y."/>
            <person name="Nakamura Y."/>
            <person name="Nagahari K."/>
            <person name="Murakami K."/>
            <person name="Yasuda T."/>
            <person name="Iwayanagi T."/>
            <person name="Wagatsuma M."/>
            <person name="Shiratori A."/>
            <person name="Sudo H."/>
            <person name="Hosoiri T."/>
            <person name="Kaku Y."/>
            <person name="Kodaira H."/>
            <person name="Kondo H."/>
            <person name="Sugawara M."/>
            <person name="Takahashi M."/>
            <person name="Kanda K."/>
            <person name="Yokoi T."/>
            <person name="Furuya T."/>
            <person name="Kikkawa E."/>
            <person name="Omura Y."/>
            <person name="Abe K."/>
            <person name="Kamihara K."/>
            <person name="Katsuta N."/>
            <person name="Sato K."/>
            <person name="Tanikawa M."/>
            <person name="Yamazaki M."/>
            <person name="Ninomiya K."/>
            <person name="Ishibashi T."/>
            <person name="Yamashita H."/>
            <person name="Murakawa K."/>
            <person name="Fujimori K."/>
            <person name="Tanai H."/>
            <person name="Kimata M."/>
            <person name="Watanabe M."/>
            <person name="Hiraoka S."/>
            <person name="Chiba Y."/>
            <person name="Ishida S."/>
            <person name="Ono Y."/>
            <person name="Takiguchi S."/>
            <person name="Watanabe S."/>
            <person name="Yosida M."/>
            <person name="Hotuta T."/>
            <person name="Kusano J."/>
            <person name="Kanehori K."/>
            <person name="Takahashi-Fujii A."/>
            <person name="Hara H."/>
            <person name="Tanase T.-O."/>
            <person name="Nomura Y."/>
            <person name="Togiya S."/>
            <person name="Komai F."/>
            <person name="Hara R."/>
            <person name="Takeuchi K."/>
            <person name="Arita M."/>
            <person name="Imose N."/>
            <person name="Musashino K."/>
            <person name="Yuuki H."/>
            <person name="Oshima A."/>
            <person name="Sasaki N."/>
            <person name="Aotsuka S."/>
            <person name="Yoshikawa Y."/>
            <person name="Matsunawa H."/>
            <person name="Ichihara T."/>
            <person name="Shiohata N."/>
            <person name="Sano S."/>
            <person name="Moriya S."/>
            <person name="Momiyama H."/>
            <person name="Satoh N."/>
            <person name="Takami S."/>
            <person name="Terashima Y."/>
            <person name="Suzuki O."/>
            <person name="Nakagawa S."/>
            <person name="Senoh A."/>
            <person name="Mizoguchi H."/>
            <person name="Goto Y."/>
            <person name="Shimizu F."/>
            <person name="Wakebe H."/>
            <person name="Hishigaki H."/>
            <person name="Watanabe T."/>
            <person name="Sugiyama A."/>
            <person name="Takemoto M."/>
            <person name="Kawakami B."/>
            <person name="Yamazaki M."/>
            <person name="Watanabe K."/>
            <person name="Kumagai A."/>
            <person name="Itakura S."/>
            <person name="Fukuzumi Y."/>
            <person name="Fujimori Y."/>
            <person name="Komiyama M."/>
            <person name="Tashiro H."/>
            <person name="Tanigami A."/>
            <person name="Fujiwara T."/>
            <person name="Ono T."/>
            <person name="Yamada K."/>
            <person name="Fujii Y."/>
            <person name="Ozaki K."/>
            <person name="Hirao M."/>
            <person name="Ohmori Y."/>
            <person name="Kawabata A."/>
            <person name="Hikiji T."/>
            <person name="Kobatake N."/>
            <person name="Inagaki H."/>
            <person name="Ikema Y."/>
            <person name="Okamoto S."/>
            <person name="Okitani R."/>
            <person name="Kawakami T."/>
            <person name="Noguchi S."/>
            <person name="Itoh T."/>
            <person name="Shigeta K."/>
            <person name="Senba T."/>
            <person name="Matsumura K."/>
            <person name="Nakajima Y."/>
            <person name="Mizuno T."/>
            <person name="Morinaga M."/>
            <person name="Sasaki M."/>
            <person name="Togashi T."/>
            <person name="Oyama M."/>
            <person name="Hata H."/>
            <person name="Watanabe M."/>
            <person name="Komatsu T."/>
            <person name="Mizushima-Sugano J."/>
            <person name="Satoh T."/>
            <person name="Shirai Y."/>
            <person name="Takahashi Y."/>
            <person name="Nakagawa K."/>
            <person name="Okumura K."/>
            <person name="Nagase T."/>
            <person name="Nomura N."/>
            <person name="Kikuchi H."/>
            <person name="Masuho Y."/>
            <person name="Yamashita R."/>
            <person name="Nakai K."/>
            <person name="Yada T."/>
            <person name="Nakamura Y."/>
            <person name="Ohara O."/>
            <person name="Isogai T."/>
            <person name="Sugano S."/>
        </authorList>
    </citation>
    <scope>NUCLEOTIDE SEQUENCE [LARGE SCALE MRNA] (ISOFORM 1)</scope>
    <source>
        <tissue>Tongue</tissue>
    </source>
</reference>
<reference key="4">
    <citation type="journal article" date="2006" name="Nature">
        <title>The DNA sequence and biological annotation of human chromosome 1.</title>
        <authorList>
            <person name="Gregory S.G."/>
            <person name="Barlow K.F."/>
            <person name="McLay K.E."/>
            <person name="Kaul R."/>
            <person name="Swarbreck D."/>
            <person name="Dunham A."/>
            <person name="Scott C.E."/>
            <person name="Howe K.L."/>
            <person name="Woodfine K."/>
            <person name="Spencer C.C.A."/>
            <person name="Jones M.C."/>
            <person name="Gillson C."/>
            <person name="Searle S."/>
            <person name="Zhou Y."/>
            <person name="Kokocinski F."/>
            <person name="McDonald L."/>
            <person name="Evans R."/>
            <person name="Phillips K."/>
            <person name="Atkinson A."/>
            <person name="Cooper R."/>
            <person name="Jones C."/>
            <person name="Hall R.E."/>
            <person name="Andrews T.D."/>
            <person name="Lloyd C."/>
            <person name="Ainscough R."/>
            <person name="Almeida J.P."/>
            <person name="Ambrose K.D."/>
            <person name="Anderson F."/>
            <person name="Andrew R.W."/>
            <person name="Ashwell R.I.S."/>
            <person name="Aubin K."/>
            <person name="Babbage A.K."/>
            <person name="Bagguley C.L."/>
            <person name="Bailey J."/>
            <person name="Beasley H."/>
            <person name="Bethel G."/>
            <person name="Bird C.P."/>
            <person name="Bray-Allen S."/>
            <person name="Brown J.Y."/>
            <person name="Brown A.J."/>
            <person name="Buckley D."/>
            <person name="Burton J."/>
            <person name="Bye J."/>
            <person name="Carder C."/>
            <person name="Chapman J.C."/>
            <person name="Clark S.Y."/>
            <person name="Clarke G."/>
            <person name="Clee C."/>
            <person name="Cobley V."/>
            <person name="Collier R.E."/>
            <person name="Corby N."/>
            <person name="Coville G.J."/>
            <person name="Davies J."/>
            <person name="Deadman R."/>
            <person name="Dunn M."/>
            <person name="Earthrowl M."/>
            <person name="Ellington A.G."/>
            <person name="Errington H."/>
            <person name="Frankish A."/>
            <person name="Frankland J."/>
            <person name="French L."/>
            <person name="Garner P."/>
            <person name="Garnett J."/>
            <person name="Gay L."/>
            <person name="Ghori M.R.J."/>
            <person name="Gibson R."/>
            <person name="Gilby L.M."/>
            <person name="Gillett W."/>
            <person name="Glithero R.J."/>
            <person name="Grafham D.V."/>
            <person name="Griffiths C."/>
            <person name="Griffiths-Jones S."/>
            <person name="Grocock R."/>
            <person name="Hammond S."/>
            <person name="Harrison E.S.I."/>
            <person name="Hart E."/>
            <person name="Haugen E."/>
            <person name="Heath P.D."/>
            <person name="Holmes S."/>
            <person name="Holt K."/>
            <person name="Howden P.J."/>
            <person name="Hunt A.R."/>
            <person name="Hunt S.E."/>
            <person name="Hunter G."/>
            <person name="Isherwood J."/>
            <person name="James R."/>
            <person name="Johnson C."/>
            <person name="Johnson D."/>
            <person name="Joy A."/>
            <person name="Kay M."/>
            <person name="Kershaw J.K."/>
            <person name="Kibukawa M."/>
            <person name="Kimberley A.M."/>
            <person name="King A."/>
            <person name="Knights A.J."/>
            <person name="Lad H."/>
            <person name="Laird G."/>
            <person name="Lawlor S."/>
            <person name="Leongamornlert D.A."/>
            <person name="Lloyd D.M."/>
            <person name="Loveland J."/>
            <person name="Lovell J."/>
            <person name="Lush M.J."/>
            <person name="Lyne R."/>
            <person name="Martin S."/>
            <person name="Mashreghi-Mohammadi M."/>
            <person name="Matthews L."/>
            <person name="Matthews N.S.W."/>
            <person name="McLaren S."/>
            <person name="Milne S."/>
            <person name="Mistry S."/>
            <person name="Moore M.J.F."/>
            <person name="Nickerson T."/>
            <person name="O'Dell C.N."/>
            <person name="Oliver K."/>
            <person name="Palmeiri A."/>
            <person name="Palmer S.A."/>
            <person name="Parker A."/>
            <person name="Patel D."/>
            <person name="Pearce A.V."/>
            <person name="Peck A.I."/>
            <person name="Pelan S."/>
            <person name="Phelps K."/>
            <person name="Phillimore B.J."/>
            <person name="Plumb R."/>
            <person name="Rajan J."/>
            <person name="Raymond C."/>
            <person name="Rouse G."/>
            <person name="Saenphimmachak C."/>
            <person name="Sehra H.K."/>
            <person name="Sheridan E."/>
            <person name="Shownkeen R."/>
            <person name="Sims S."/>
            <person name="Skuce C.D."/>
            <person name="Smith M."/>
            <person name="Steward C."/>
            <person name="Subramanian S."/>
            <person name="Sycamore N."/>
            <person name="Tracey A."/>
            <person name="Tromans A."/>
            <person name="Van Helmond Z."/>
            <person name="Wall M."/>
            <person name="Wallis J.M."/>
            <person name="White S."/>
            <person name="Whitehead S.L."/>
            <person name="Wilkinson J.E."/>
            <person name="Willey D.L."/>
            <person name="Williams H."/>
            <person name="Wilming L."/>
            <person name="Wray P.W."/>
            <person name="Wu Z."/>
            <person name="Coulson A."/>
            <person name="Vaudin M."/>
            <person name="Sulston J.E."/>
            <person name="Durbin R.M."/>
            <person name="Hubbard T."/>
            <person name="Wooster R."/>
            <person name="Dunham I."/>
            <person name="Carter N.P."/>
            <person name="McVean G."/>
            <person name="Ross M.T."/>
            <person name="Harrow J."/>
            <person name="Olson M.V."/>
            <person name="Beck S."/>
            <person name="Rogers J."/>
            <person name="Bentley D.R."/>
        </authorList>
    </citation>
    <scope>NUCLEOTIDE SEQUENCE [LARGE SCALE GENOMIC DNA]</scope>
</reference>
<reference key="5">
    <citation type="journal article" date="2004" name="Genome Res.">
        <title>The status, quality, and expansion of the NIH full-length cDNA project: the Mammalian Gene Collection (MGC).</title>
        <authorList>
            <consortium name="The MGC Project Team"/>
        </authorList>
    </citation>
    <scope>NUCLEOTIDE SEQUENCE [LARGE SCALE MRNA] (ISOFORM 4)</scope>
    <source>
        <tissue>Pre-B cell</tissue>
    </source>
</reference>
<reference key="6">
    <citation type="journal article" date="2008" name="Proc. Natl. Acad. Sci. U.S.A.">
        <title>A quantitative atlas of mitotic phosphorylation.</title>
        <authorList>
            <person name="Dephoure N."/>
            <person name="Zhou C."/>
            <person name="Villen J."/>
            <person name="Beausoleil S.A."/>
            <person name="Bakalarski C.E."/>
            <person name="Elledge S.J."/>
            <person name="Gygi S.P."/>
        </authorList>
    </citation>
    <scope>PHOSPHORYLATION [LARGE SCALE ANALYSIS] AT THR-24</scope>
    <scope>IDENTIFICATION BY MASS SPECTROMETRY [LARGE SCALE ANALYSIS]</scope>
    <source>
        <tissue>Cervix carcinoma</tissue>
    </source>
</reference>
<reference key="7">
    <citation type="journal article" date="2012" name="Nat. Struct. Mol. Biol.">
        <title>Molecular basis for H3K36me3 recognition by the Tudor domain of PHF1.</title>
        <authorList>
            <person name="Musselman C.A."/>
            <person name="Avvakumov N."/>
            <person name="Watanabe R."/>
            <person name="Abraham C.G."/>
            <person name="Lalonde M.E."/>
            <person name="Hong Z."/>
            <person name="Allen C."/>
            <person name="Roy S."/>
            <person name="Nunez J.K."/>
            <person name="Nickoloff J."/>
            <person name="Kulesza C.A."/>
            <person name="Yasui A."/>
            <person name="Cote J."/>
            <person name="Kutateladze T.G."/>
        </authorList>
    </citation>
    <scope>FUNCTION</scope>
    <scope>H3K36ME3-BINDING</scope>
</reference>
<reference key="8">
    <citation type="journal article" date="2013" name="Biochem. Biophys. Res. Commun.">
        <title>Tudor domains of the PRC2 components PHF1 and PHF19 selectively bind to histone H3K36me3.</title>
        <authorList>
            <person name="Qin S."/>
            <person name="Guo Y."/>
            <person name="Xu C."/>
            <person name="Bian C."/>
            <person name="Fu M."/>
            <person name="Gong S."/>
            <person name="Min J."/>
        </authorList>
    </citation>
    <scope>FUNCTION</scope>
    <scope>H3K36ME3-BINDING</scope>
</reference>
<reference key="9">
    <citation type="journal article" date="2013" name="J. Proteome Res.">
        <title>Toward a comprehensive characterization of a human cancer cell phosphoproteome.</title>
        <authorList>
            <person name="Zhou H."/>
            <person name="Di Palma S."/>
            <person name="Preisinger C."/>
            <person name="Peng M."/>
            <person name="Polat A.N."/>
            <person name="Heck A.J."/>
            <person name="Mohammed S."/>
        </authorList>
    </citation>
    <scope>PHOSPHORYLATION [LARGE SCALE ANALYSIS] AT SER-452</scope>
    <scope>IDENTIFICATION BY MASS SPECTROMETRY [LARGE SCALE ANALYSIS]</scope>
    <source>
        <tissue>Erythroleukemia</tissue>
    </source>
</reference>
<reference key="10">
    <citation type="journal article" date="2017" name="Nat. Struct. Mol. Biol.">
        <title>Site-specific mapping of the human SUMO proteome reveals co-modification with phosphorylation.</title>
        <authorList>
            <person name="Hendriks I.A."/>
            <person name="Lyon D."/>
            <person name="Young C."/>
            <person name="Jensen L.J."/>
            <person name="Vertegaal A.C."/>
            <person name="Nielsen M.L."/>
        </authorList>
    </citation>
    <scope>SUMOYLATION [LARGE SCALE ANALYSIS] AT LYS-360 AND LYS-522</scope>
    <scope>IDENTIFICATION BY MASS SPECTROMETRY [LARGE SCALE ANALYSIS]</scope>
</reference>
<reference evidence="9" key="11">
    <citation type="journal article" date="2020" name="Mol. Cell">
        <title>A Dimeric Structural Scaffold for PRC2-PCL Targeting to CpG Island Chromatin.</title>
        <authorList>
            <person name="Chen S."/>
            <person name="Jiao L."/>
            <person name="Liu X."/>
            <person name="Yang X."/>
            <person name="Liu X."/>
        </authorList>
    </citation>
    <scope>FUNCTION</scope>
    <scope>ASSOCIATION WITH THE PRC2 COMPLEX</scope>
    <scope>SUBCELLULAR LOCATION</scope>
    <scope>MUTAGENESIS OF 338-LYS-LYS-339 AND 544-GLN--GLY-557</scope>
</reference>
<keyword id="KW-0002">3D-structure</keyword>
<keyword id="KW-0025">Alternative splicing</keyword>
<keyword id="KW-0156">Chromatin regulator</keyword>
<keyword id="KW-0238">DNA-binding</keyword>
<keyword id="KW-1017">Isopeptide bond</keyword>
<keyword id="KW-0479">Metal-binding</keyword>
<keyword id="KW-0539">Nucleus</keyword>
<keyword id="KW-0597">Phosphoprotein</keyword>
<keyword id="KW-1267">Proteomics identification</keyword>
<keyword id="KW-1185">Reference proteome</keyword>
<keyword id="KW-0677">Repeat</keyword>
<keyword id="KW-0832">Ubl conjugation</keyword>
<keyword id="KW-0862">Zinc</keyword>
<keyword id="KW-0863">Zinc-finger</keyword>
<organism>
    <name type="scientific">Homo sapiens</name>
    <name type="common">Human</name>
    <dbReference type="NCBI Taxonomy" id="9606"/>
    <lineage>
        <taxon>Eukaryota</taxon>
        <taxon>Metazoa</taxon>
        <taxon>Chordata</taxon>
        <taxon>Craniata</taxon>
        <taxon>Vertebrata</taxon>
        <taxon>Euteleostomi</taxon>
        <taxon>Mammalia</taxon>
        <taxon>Eutheria</taxon>
        <taxon>Euarchontoglires</taxon>
        <taxon>Primates</taxon>
        <taxon>Haplorrhini</taxon>
        <taxon>Catarrhini</taxon>
        <taxon>Hominidae</taxon>
        <taxon>Homo</taxon>
    </lineage>
</organism>
<evidence type="ECO:0000250" key="1">
    <source>
        <dbReference type="UniProtKB" id="Q02395"/>
    </source>
</evidence>
<evidence type="ECO:0000255" key="2">
    <source>
        <dbReference type="PROSITE-ProRule" id="PRU00146"/>
    </source>
</evidence>
<evidence type="ECO:0000256" key="3">
    <source>
        <dbReference type="SAM" id="MobiDB-lite"/>
    </source>
</evidence>
<evidence type="ECO:0000269" key="4">
    <source>
    </source>
</evidence>
<evidence type="ECO:0000269" key="5">
    <source>
    </source>
</evidence>
<evidence type="ECO:0000269" key="6">
    <source>
    </source>
</evidence>
<evidence type="ECO:0000303" key="7">
    <source>
    </source>
</evidence>
<evidence type="ECO:0000303" key="8">
    <source ref="1"/>
</evidence>
<evidence type="ECO:0000305" key="9"/>
<evidence type="ECO:0007744" key="10">
    <source>
    </source>
</evidence>
<evidence type="ECO:0007744" key="11">
    <source>
    </source>
</evidence>
<evidence type="ECO:0007744" key="12">
    <source>
    </source>
</evidence>
<evidence type="ECO:0007829" key="13">
    <source>
        <dbReference type="PDB" id="5XFR"/>
    </source>
</evidence>
<comment type="function">
    <text evidence="1 4 5 6">Polycomb group (PcG) protein that specifically binds histone H3 trimethylated at 'Lys-36' (H3K36me3) and recruits the PRC2 complex, thus enhancing PRC2 H3K27me3 methylation activity (PubMed:23142980, PubMed:23228662, PubMed:31959557). Regulates the transcriptional networks during embryonic stem cell self-renewal and differentiation (By similarity). Promotes recruitment of the PRC2 complex to the inactive X chromosome in differentiating XX ES cells and PRC2 recruitment to target genes in undifferentiated ES cells (By similarity). Required to repress Hox genes by enhancing H3K27me3 methylation of the PRC2 complex (By similarity). In some conditions may act as an inhibitor of PRC2 activity: able to activate the CDKN2A gene and promote cellular senescence by suppressing the catalytic activity of the PRC2 complex locally (By similarity). Binds to the metal-regulating-element (MRE) of MT1A gene promoter (By similarity).</text>
</comment>
<comment type="subunit">
    <text evidence="6">Associates with the PRC2 complex, which consists of the core components EED, EZH1 or EZH2, SUZ12, and RBBP4, and various combinations of accessory subunits including AEBP2, JARID2, PHF19, MTF2 and EPOP (PubMed:31959557). Forms a dimeric PRC2.1 (class 1, PRC-PCL) complex consisting of at least SUZ12, RBBP4, and PHF19 or MTF2; PHF19 and MTF2 stabilize the dimeric structure which enhances PRC2 interaction with chromatin (PubMed:31959557).</text>
</comment>
<comment type="interaction">
    <interactant intactId="EBI-10698053">
        <id>Q9Y483-4</id>
    </interactant>
    <interactant intactId="EBI-946046">
        <id>P54252</id>
        <label>ATXN3</label>
    </interactant>
    <organismsDiffer>false</organismsDiffer>
    <experiments>3</experiments>
</comment>
<comment type="interaction">
    <interactant intactId="EBI-10698053">
        <id>Q9Y483-4</id>
    </interactant>
    <interactant intactId="EBI-745859">
        <id>P55273</id>
        <label>CDKN2D</label>
    </interactant>
    <organismsDiffer>false</organismsDiffer>
    <experiments>3</experiments>
</comment>
<comment type="interaction">
    <interactant intactId="EBI-10698053">
        <id>Q9Y483-4</id>
    </interactant>
    <interactant intactId="EBI-715104">
        <id>Q9NX09</id>
        <label>DDIT4</label>
    </interactant>
    <organismsDiffer>false</organismsDiffer>
    <experiments>3</experiments>
</comment>
<comment type="interaction">
    <interactant intactId="EBI-10698053">
        <id>Q9Y483-4</id>
    </interactant>
    <interactant intactId="EBI-10976677">
        <id>G5E9A7</id>
        <label>DMWD</label>
    </interactant>
    <organismsDiffer>false</organismsDiffer>
    <experiments>3</experiments>
</comment>
<comment type="interaction">
    <interactant intactId="EBI-10698053">
        <id>Q9Y483-4</id>
    </interactant>
    <interactant intactId="EBI-744302">
        <id>P14136</id>
        <label>GFAP</label>
    </interactant>
    <organismsDiffer>false</organismsDiffer>
    <experiments>3</experiments>
</comment>
<comment type="interaction">
    <interactant intactId="EBI-10698053">
        <id>Q9Y483-4</id>
    </interactant>
    <interactant intactId="EBI-1955541">
        <id>Q53GS7</id>
        <label>GLE1</label>
    </interactant>
    <organismsDiffer>false</organismsDiffer>
    <experiments>3</experiments>
</comment>
<comment type="interaction">
    <interactant intactId="EBI-10698053">
        <id>Q9Y483-4</id>
    </interactant>
    <interactant intactId="EBI-1055254">
        <id>Q8WXH2</id>
        <label>JPH3</label>
    </interactant>
    <organismsDiffer>false</organismsDiffer>
    <experiments>3</experiments>
</comment>
<comment type="interaction">
    <interactant intactId="EBI-10698053">
        <id>Q9Y483-4</id>
    </interactant>
    <interactant intactId="EBI-21251460">
        <id>O60260-5</id>
        <label>PRKN</label>
    </interactant>
    <organismsDiffer>false</organismsDiffer>
    <experiments>3</experiments>
</comment>
<comment type="interaction">
    <interactant intactId="EBI-10698053">
        <id>Q9Y483-4</id>
    </interactant>
    <interactant intactId="EBI-985879">
        <id>P37840</id>
        <label>SNCA</label>
    </interactant>
    <organismsDiffer>false</organismsDiffer>
    <experiments>3</experiments>
</comment>
<comment type="interaction">
    <interactant intactId="EBI-10698053">
        <id>Q9Y483-4</id>
    </interactant>
    <interactant intactId="EBI-5235340">
        <id>Q7Z699</id>
        <label>SPRED1</label>
    </interactant>
    <organismsDiffer>false</organismsDiffer>
    <experiments>3</experiments>
</comment>
<comment type="interaction">
    <interactant intactId="EBI-10698053">
        <id>Q9Y483-4</id>
    </interactant>
    <interactant intactId="EBI-372899">
        <id>Q13148</id>
        <label>TARDBP</label>
    </interactant>
    <organismsDiffer>false</organismsDiffer>
    <experiments>3</experiments>
</comment>
<comment type="interaction">
    <interactant intactId="EBI-10698053">
        <id>Q9Y483-4</id>
    </interactant>
    <interactant intactId="EBI-25872486">
        <id>Q96BH6</id>
    </interactant>
    <organismsDiffer>false</organismsDiffer>
    <experiments>3</experiments>
</comment>
<comment type="subcellular location">
    <subcellularLocation>
        <location evidence="6">Nucleus</location>
    </subcellularLocation>
    <text evidence="6">Localizes to chromatin as part of the PRC2 complex.</text>
</comment>
<comment type="alternative products">
    <event type="alternative splicing"/>
    <isoform>
        <id>Q9Y483-1</id>
        <name>1</name>
        <sequence type="displayed"/>
    </isoform>
    <isoform>
        <id>Q9Y483-2</id>
        <name>2</name>
        <sequence type="described" ref="VSP_004696"/>
    </isoform>
    <isoform>
        <id>Q9Y483-3</id>
        <name>3</name>
        <sequence type="described" ref="VSP_040329"/>
    </isoform>
    <isoform>
        <id>Q9Y483-4</id>
        <name>4</name>
        <sequence type="described" ref="VSP_053348"/>
    </isoform>
</comment>
<comment type="domain">
    <text evidence="4 5">The Tudor domain recognizes and binds H3K36me3 (PubMed:23142980, PubMed:23228662).</text>
</comment>
<comment type="similarity">
    <text evidence="9">Belongs to the Polycomblike family.</text>
</comment>
<accession>Q9Y483</accession>
<accession>A6NGQ9</accession>
<accession>A8K2Q3</accession>
<accession>B1AKT5</accession>
<accession>B1AKT6</accession>
<accession>Q96G26</accession>
<accession>Q9UES9</accession>
<accession>Q9UP40</accession>